<dbReference type="EC" id="3.6.1.-" evidence="1"/>
<dbReference type="EMBL" id="CP000247">
    <property type="protein sequence ID" value="ABG70827.1"/>
    <property type="molecule type" value="Genomic_DNA"/>
</dbReference>
<dbReference type="RefSeq" id="WP_000564489.1">
    <property type="nucleotide sequence ID" value="NC_008253.1"/>
</dbReference>
<dbReference type="SMR" id="Q0TE02"/>
<dbReference type="GeneID" id="75203778"/>
<dbReference type="KEGG" id="ecp:ECP_2843"/>
<dbReference type="HOGENOM" id="CLU_087195_3_2_6"/>
<dbReference type="Proteomes" id="UP000009182">
    <property type="component" value="Chromosome"/>
</dbReference>
<dbReference type="GO" id="GO:0005737">
    <property type="term" value="C:cytoplasm"/>
    <property type="evidence" value="ECO:0007669"/>
    <property type="project" value="TreeGrafter"/>
</dbReference>
<dbReference type="GO" id="GO:0034353">
    <property type="term" value="F:mRNA 5'-diphosphatase activity"/>
    <property type="evidence" value="ECO:0007669"/>
    <property type="project" value="TreeGrafter"/>
</dbReference>
<dbReference type="GO" id="GO:0006402">
    <property type="term" value="P:mRNA catabolic process"/>
    <property type="evidence" value="ECO:0007669"/>
    <property type="project" value="TreeGrafter"/>
</dbReference>
<dbReference type="CDD" id="cd03671">
    <property type="entry name" value="NUDIX_Ap4A_hydrolase_plant_like"/>
    <property type="match status" value="1"/>
</dbReference>
<dbReference type="FunFam" id="3.90.79.10:FF:000001">
    <property type="entry name" value="RNA pyrophosphohydrolase"/>
    <property type="match status" value="1"/>
</dbReference>
<dbReference type="Gene3D" id="3.90.79.10">
    <property type="entry name" value="Nucleoside Triphosphate Pyrophosphohydrolase"/>
    <property type="match status" value="1"/>
</dbReference>
<dbReference type="HAMAP" id="MF_00298">
    <property type="entry name" value="Nudix_RppH"/>
    <property type="match status" value="1"/>
</dbReference>
<dbReference type="InterPro" id="IPR020476">
    <property type="entry name" value="Nudix_hydrolase"/>
</dbReference>
<dbReference type="InterPro" id="IPR015797">
    <property type="entry name" value="NUDIX_hydrolase-like_dom_sf"/>
</dbReference>
<dbReference type="InterPro" id="IPR020084">
    <property type="entry name" value="NUDIX_hydrolase_CS"/>
</dbReference>
<dbReference type="InterPro" id="IPR000086">
    <property type="entry name" value="NUDIX_hydrolase_dom"/>
</dbReference>
<dbReference type="InterPro" id="IPR022927">
    <property type="entry name" value="RppH"/>
</dbReference>
<dbReference type="NCBIfam" id="NF001934">
    <property type="entry name" value="PRK00714.1-1"/>
    <property type="match status" value="1"/>
</dbReference>
<dbReference type="NCBIfam" id="NF001937">
    <property type="entry name" value="PRK00714.1-4"/>
    <property type="match status" value="1"/>
</dbReference>
<dbReference type="NCBIfam" id="NF001938">
    <property type="entry name" value="PRK00714.1-5"/>
    <property type="match status" value="1"/>
</dbReference>
<dbReference type="PANTHER" id="PTHR23114">
    <property type="entry name" value="M7GPPPN-MRNA HYDROLASE"/>
    <property type="match status" value="1"/>
</dbReference>
<dbReference type="PANTHER" id="PTHR23114:SF17">
    <property type="entry name" value="M7GPPPN-MRNA HYDROLASE"/>
    <property type="match status" value="1"/>
</dbReference>
<dbReference type="Pfam" id="PF00293">
    <property type="entry name" value="NUDIX"/>
    <property type="match status" value="1"/>
</dbReference>
<dbReference type="PRINTS" id="PR00502">
    <property type="entry name" value="NUDIXFAMILY"/>
</dbReference>
<dbReference type="SUPFAM" id="SSF55811">
    <property type="entry name" value="Nudix"/>
    <property type="match status" value="1"/>
</dbReference>
<dbReference type="PROSITE" id="PS51462">
    <property type="entry name" value="NUDIX"/>
    <property type="match status" value="1"/>
</dbReference>
<dbReference type="PROSITE" id="PS00893">
    <property type="entry name" value="NUDIX_BOX"/>
    <property type="match status" value="1"/>
</dbReference>
<organism>
    <name type="scientific">Escherichia coli O6:K15:H31 (strain 536 / UPEC)</name>
    <dbReference type="NCBI Taxonomy" id="362663"/>
    <lineage>
        <taxon>Bacteria</taxon>
        <taxon>Pseudomonadati</taxon>
        <taxon>Pseudomonadota</taxon>
        <taxon>Gammaproteobacteria</taxon>
        <taxon>Enterobacterales</taxon>
        <taxon>Enterobacteriaceae</taxon>
        <taxon>Escherichia</taxon>
    </lineage>
</organism>
<reference key="1">
    <citation type="journal article" date="2006" name="Mol. Microbiol.">
        <title>Role of pathogenicity island-associated integrases in the genome plasticity of uropathogenic Escherichia coli strain 536.</title>
        <authorList>
            <person name="Hochhut B."/>
            <person name="Wilde C."/>
            <person name="Balling G."/>
            <person name="Middendorf B."/>
            <person name="Dobrindt U."/>
            <person name="Brzuszkiewicz E."/>
            <person name="Gottschalk G."/>
            <person name="Carniel E."/>
            <person name="Hacker J."/>
        </authorList>
    </citation>
    <scope>NUCLEOTIDE SEQUENCE [LARGE SCALE GENOMIC DNA]</scope>
    <source>
        <strain>536 / UPEC</strain>
    </source>
</reference>
<comment type="function">
    <text evidence="1">Accelerates the degradation of transcripts by removing pyrophosphate from the 5'-end of triphosphorylated RNA, leading to a more labile monophosphorylated state that can stimulate subsequent ribonuclease cleavage.</text>
</comment>
<comment type="cofactor">
    <cofactor evidence="1">
        <name>a divalent metal cation</name>
        <dbReference type="ChEBI" id="CHEBI:60240"/>
    </cofactor>
</comment>
<comment type="similarity">
    <text evidence="1">Belongs to the Nudix hydrolase family. RppH subfamily.</text>
</comment>
<protein>
    <recommendedName>
        <fullName evidence="1">RNA pyrophosphohydrolase</fullName>
        <ecNumber evidence="1">3.6.1.-</ecNumber>
    </recommendedName>
    <alternativeName>
        <fullName evidence="1">(Di)nucleoside polyphosphate hydrolase</fullName>
    </alternativeName>
</protein>
<accession>Q0TE02</accession>
<gene>
    <name evidence="1" type="primary">rppH</name>
    <name evidence="1" type="synonym">nudH</name>
    <name type="ordered locus">ECP_2843</name>
</gene>
<keyword id="KW-0378">Hydrolase</keyword>
<sequence length="176" mass="20795">MIDDDGYRPNVGIVICNRQGQVMWARRFGQHSWQFPQGGINPGESAEQAMYRELFEEVGLSRKDVRILASTRNWLRYKLPKRLVRWDTKPVCIGQKQKWFLLQLVSGDAEINMQTSSTPEFDGWRWVSYWYPVRQVVSFKRDVYRRVMKEFASVVMSLQENTPKPQNASAYRRKRG</sequence>
<name>RPPH_ECOL5</name>
<evidence type="ECO:0000255" key="1">
    <source>
        <dbReference type="HAMAP-Rule" id="MF_00298"/>
    </source>
</evidence>
<proteinExistence type="inferred from homology"/>
<feature type="chain" id="PRO_1000021941" description="RNA pyrophosphohydrolase">
    <location>
        <begin position="1"/>
        <end position="176"/>
    </location>
</feature>
<feature type="domain" description="Nudix hydrolase" evidence="1">
    <location>
        <begin position="6"/>
        <end position="149"/>
    </location>
</feature>
<feature type="short sequence motif" description="Nudix box">
    <location>
        <begin position="38"/>
        <end position="59"/>
    </location>
</feature>